<keyword id="KW-0963">Cytoplasm</keyword>
<keyword id="KW-0238">DNA-binding</keyword>
<accession>B7NIF9</accession>
<protein>
    <recommendedName>
        <fullName evidence="1">Nucleoid-associated protein YbaB</fullName>
    </recommendedName>
</protein>
<feature type="chain" id="PRO_1000119319" description="Nucleoid-associated protein YbaB">
    <location>
        <begin position="1"/>
        <end position="109"/>
    </location>
</feature>
<gene>
    <name evidence="1" type="primary">ybaB</name>
    <name type="ordered locus">ECIAI39_0200</name>
</gene>
<evidence type="ECO:0000255" key="1">
    <source>
        <dbReference type="HAMAP-Rule" id="MF_00274"/>
    </source>
</evidence>
<proteinExistence type="inferred from homology"/>
<name>YBAB_ECO7I</name>
<comment type="function">
    <text evidence="1">Binds to DNA and alters its conformation. May be involved in regulation of gene expression, nucleoid organization and DNA protection.</text>
</comment>
<comment type="subunit">
    <text evidence="1">Homodimer.</text>
</comment>
<comment type="subcellular location">
    <subcellularLocation>
        <location evidence="1">Cytoplasm</location>
        <location evidence="1">Nucleoid</location>
    </subcellularLocation>
</comment>
<comment type="similarity">
    <text evidence="1">Belongs to the YbaB/EbfC family.</text>
</comment>
<dbReference type="EMBL" id="CU928164">
    <property type="protein sequence ID" value="CAR16340.1"/>
    <property type="molecule type" value="Genomic_DNA"/>
</dbReference>
<dbReference type="RefSeq" id="WP_000467098.1">
    <property type="nucleotide sequence ID" value="NC_011750.1"/>
</dbReference>
<dbReference type="RefSeq" id="YP_002406246.1">
    <property type="nucleotide sequence ID" value="NC_011750.1"/>
</dbReference>
<dbReference type="SMR" id="B7NIF9"/>
<dbReference type="STRING" id="585057.ECIAI39_0200"/>
<dbReference type="KEGG" id="ect:ECIAI39_0200"/>
<dbReference type="PATRIC" id="fig|585057.6.peg.213"/>
<dbReference type="HOGENOM" id="CLU_140930_0_0_6"/>
<dbReference type="Proteomes" id="UP000000749">
    <property type="component" value="Chromosome"/>
</dbReference>
<dbReference type="GO" id="GO:0043590">
    <property type="term" value="C:bacterial nucleoid"/>
    <property type="evidence" value="ECO:0007669"/>
    <property type="project" value="UniProtKB-UniRule"/>
</dbReference>
<dbReference type="GO" id="GO:0005829">
    <property type="term" value="C:cytosol"/>
    <property type="evidence" value="ECO:0007669"/>
    <property type="project" value="TreeGrafter"/>
</dbReference>
<dbReference type="GO" id="GO:0003677">
    <property type="term" value="F:DNA binding"/>
    <property type="evidence" value="ECO:0007669"/>
    <property type="project" value="UniProtKB-UniRule"/>
</dbReference>
<dbReference type="FunFam" id="3.30.1310.10:FF:000001">
    <property type="entry name" value="Nucleoid-associated protein YbaB"/>
    <property type="match status" value="1"/>
</dbReference>
<dbReference type="Gene3D" id="3.30.1310.10">
    <property type="entry name" value="Nucleoid-associated protein YbaB-like domain"/>
    <property type="match status" value="1"/>
</dbReference>
<dbReference type="HAMAP" id="MF_00274">
    <property type="entry name" value="DNA_YbaB_EbfC"/>
    <property type="match status" value="1"/>
</dbReference>
<dbReference type="InterPro" id="IPR036894">
    <property type="entry name" value="YbaB-like_sf"/>
</dbReference>
<dbReference type="InterPro" id="IPR004401">
    <property type="entry name" value="YbaB/EbfC"/>
</dbReference>
<dbReference type="NCBIfam" id="TIGR00103">
    <property type="entry name" value="DNA_YbaB_EbfC"/>
    <property type="match status" value="1"/>
</dbReference>
<dbReference type="PANTHER" id="PTHR33449">
    <property type="entry name" value="NUCLEOID-ASSOCIATED PROTEIN YBAB"/>
    <property type="match status" value="1"/>
</dbReference>
<dbReference type="PANTHER" id="PTHR33449:SF1">
    <property type="entry name" value="NUCLEOID-ASSOCIATED PROTEIN YBAB"/>
    <property type="match status" value="1"/>
</dbReference>
<dbReference type="Pfam" id="PF02575">
    <property type="entry name" value="YbaB_DNA_bd"/>
    <property type="match status" value="1"/>
</dbReference>
<dbReference type="PIRSF" id="PIRSF004555">
    <property type="entry name" value="UCP004555"/>
    <property type="match status" value="1"/>
</dbReference>
<dbReference type="SUPFAM" id="SSF82607">
    <property type="entry name" value="YbaB-like"/>
    <property type="match status" value="1"/>
</dbReference>
<organism>
    <name type="scientific">Escherichia coli O7:K1 (strain IAI39 / ExPEC)</name>
    <dbReference type="NCBI Taxonomy" id="585057"/>
    <lineage>
        <taxon>Bacteria</taxon>
        <taxon>Pseudomonadati</taxon>
        <taxon>Pseudomonadota</taxon>
        <taxon>Gammaproteobacteria</taxon>
        <taxon>Enterobacterales</taxon>
        <taxon>Enterobacteriaceae</taxon>
        <taxon>Escherichia</taxon>
    </lineage>
</organism>
<sequence length="109" mass="12015">MFGKGGLGNLMKQAQQMQEKMQKMQEEIAQLEVTGESGAGLVKVTINGAHNCRRVEIDPSLLEDDKEMLEDLVAAAFNDAARRIEETQKEKMASVSSGMQLPPGFKMPF</sequence>
<reference key="1">
    <citation type="journal article" date="2009" name="PLoS Genet.">
        <title>Organised genome dynamics in the Escherichia coli species results in highly diverse adaptive paths.</title>
        <authorList>
            <person name="Touchon M."/>
            <person name="Hoede C."/>
            <person name="Tenaillon O."/>
            <person name="Barbe V."/>
            <person name="Baeriswyl S."/>
            <person name="Bidet P."/>
            <person name="Bingen E."/>
            <person name="Bonacorsi S."/>
            <person name="Bouchier C."/>
            <person name="Bouvet O."/>
            <person name="Calteau A."/>
            <person name="Chiapello H."/>
            <person name="Clermont O."/>
            <person name="Cruveiller S."/>
            <person name="Danchin A."/>
            <person name="Diard M."/>
            <person name="Dossat C."/>
            <person name="Karoui M.E."/>
            <person name="Frapy E."/>
            <person name="Garry L."/>
            <person name="Ghigo J.M."/>
            <person name="Gilles A.M."/>
            <person name="Johnson J."/>
            <person name="Le Bouguenec C."/>
            <person name="Lescat M."/>
            <person name="Mangenot S."/>
            <person name="Martinez-Jehanne V."/>
            <person name="Matic I."/>
            <person name="Nassif X."/>
            <person name="Oztas S."/>
            <person name="Petit M.A."/>
            <person name="Pichon C."/>
            <person name="Rouy Z."/>
            <person name="Ruf C.S."/>
            <person name="Schneider D."/>
            <person name="Tourret J."/>
            <person name="Vacherie B."/>
            <person name="Vallenet D."/>
            <person name="Medigue C."/>
            <person name="Rocha E.P.C."/>
            <person name="Denamur E."/>
        </authorList>
    </citation>
    <scope>NUCLEOTIDE SEQUENCE [LARGE SCALE GENOMIC DNA]</scope>
    <source>
        <strain>IAI39 / ExPEC</strain>
    </source>
</reference>